<reference key="1">
    <citation type="journal article" date="2003" name="Mol. Microbiol.">
        <title>Genome-based analysis of virulence genes in a non-biofilm-forming Staphylococcus epidermidis strain (ATCC 12228).</title>
        <authorList>
            <person name="Zhang Y.-Q."/>
            <person name="Ren S.-X."/>
            <person name="Li H.-L."/>
            <person name="Wang Y.-X."/>
            <person name="Fu G."/>
            <person name="Yang J."/>
            <person name="Qin Z.-Q."/>
            <person name="Miao Y.-G."/>
            <person name="Wang W.-Y."/>
            <person name="Chen R.-S."/>
            <person name="Shen Y."/>
            <person name="Chen Z."/>
            <person name="Yuan Z.-H."/>
            <person name="Zhao G.-P."/>
            <person name="Qu D."/>
            <person name="Danchin A."/>
            <person name="Wen Y.-M."/>
        </authorList>
    </citation>
    <scope>NUCLEOTIDE SEQUENCE [LARGE SCALE GENOMIC DNA]</scope>
    <source>
        <strain>ATCC 12228 / FDA PCI 1200</strain>
    </source>
</reference>
<keyword id="KW-0067">ATP-binding</keyword>
<keyword id="KW-1003">Cell membrane</keyword>
<keyword id="KW-0418">Kinase</keyword>
<keyword id="KW-0472">Membrane</keyword>
<keyword id="KW-0547">Nucleotide-binding</keyword>
<keyword id="KW-0597">Phosphoprotein</keyword>
<keyword id="KW-0808">Transferase</keyword>
<keyword id="KW-0812">Transmembrane</keyword>
<keyword id="KW-1133">Transmembrane helix</keyword>
<keyword id="KW-0902">Two-component regulatory system</keyword>
<protein>
    <recommendedName>
        <fullName>Sensor protein VraS</fullName>
        <ecNumber>2.7.13.3</ecNumber>
    </recommendedName>
</protein>
<proteinExistence type="inferred from homology"/>
<sequence>MNHYIRAIGSMLILVYSMLIAFLFIDKVFVNIIFFQGMFYTQIFGIPVFLFLNLLIVLLCIIVGSVLAYKINQQNDWIISQIERSIEGQTVGINDQNIELYTETIDIYHTLVPLNQELHRLRMKTQNLTNENYNINDVKVKKIIEDERQRLARELHDSVSQQLFAASMMLSAIKESKLEPPLNQQIPILEKMVQDSQLEMRALLLHLRPIGLKDKSLGEGIKDLVIDLQKKVPMKVVHEIQDFEVPKGIEDHLFRITQEAISNTLRHSNGTKVTVELFNQEDYLLLRIQDNGKGFNVDEKFEQSYGLKNMRERALEIGATFHIVSLPDSGTRIEVKAPLNKEENSSGD</sequence>
<organism>
    <name type="scientific">Staphylococcus epidermidis (strain ATCC 12228 / FDA PCI 1200)</name>
    <dbReference type="NCBI Taxonomy" id="176280"/>
    <lineage>
        <taxon>Bacteria</taxon>
        <taxon>Bacillati</taxon>
        <taxon>Bacillota</taxon>
        <taxon>Bacilli</taxon>
        <taxon>Bacillales</taxon>
        <taxon>Staphylococcaceae</taxon>
        <taxon>Staphylococcus</taxon>
    </lineage>
</organism>
<feature type="chain" id="PRO_0000074906" description="Sensor protein VraS">
    <location>
        <begin position="1"/>
        <end position="348"/>
    </location>
</feature>
<feature type="transmembrane region" description="Helical" evidence="2">
    <location>
        <begin position="13"/>
        <end position="33"/>
    </location>
</feature>
<feature type="transmembrane region" description="Helical" evidence="2">
    <location>
        <begin position="43"/>
        <end position="63"/>
    </location>
</feature>
<feature type="domain" description="Histidine kinase">
    <location>
        <begin position="150"/>
        <end position="341"/>
    </location>
</feature>
<gene>
    <name type="primary">vraS</name>
    <name type="ordered locus">SE_1570</name>
</gene>
<name>VRAS_STAES</name>
<accession>Q8CRV2</accession>
<evidence type="ECO:0000250" key="1"/>
<evidence type="ECO:0000255" key="2"/>
<evidence type="ECO:0000305" key="3"/>
<comment type="function">
    <text evidence="1">Member of the two-component regulatory system VraS/VraR involved in the control of the cell wall peptidoglycan biosynthesis. Probably activates VraR by phosphorylation (By similarity).</text>
</comment>
<comment type="catalytic activity">
    <reaction>
        <text>ATP + protein L-histidine = ADP + protein N-phospho-L-histidine.</text>
        <dbReference type="EC" id="2.7.13.3"/>
    </reaction>
</comment>
<comment type="subcellular location">
    <subcellularLocation>
        <location evidence="3">Cell membrane</location>
        <topology evidence="3">Multi-pass membrane protein</topology>
    </subcellularLocation>
</comment>
<dbReference type="EC" id="2.7.13.3"/>
<dbReference type="EMBL" id="AE015929">
    <property type="protein sequence ID" value="AAO05169.1"/>
    <property type="molecule type" value="Genomic_DNA"/>
</dbReference>
<dbReference type="RefSeq" id="NP_765125.1">
    <property type="nucleotide sequence ID" value="NC_004461.1"/>
</dbReference>
<dbReference type="RefSeq" id="WP_001830374.1">
    <property type="nucleotide sequence ID" value="NZ_WBME01000010.1"/>
</dbReference>
<dbReference type="SMR" id="Q8CRV2"/>
<dbReference type="KEGG" id="sep:SE_1570"/>
<dbReference type="PATRIC" id="fig|176280.10.peg.1534"/>
<dbReference type="eggNOG" id="COG4585">
    <property type="taxonomic scope" value="Bacteria"/>
</dbReference>
<dbReference type="HOGENOM" id="CLU_000445_20_12_9"/>
<dbReference type="OrthoDB" id="9795828at2"/>
<dbReference type="Proteomes" id="UP000001411">
    <property type="component" value="Chromosome"/>
</dbReference>
<dbReference type="GO" id="GO:0005886">
    <property type="term" value="C:plasma membrane"/>
    <property type="evidence" value="ECO:0007669"/>
    <property type="project" value="UniProtKB-SubCell"/>
</dbReference>
<dbReference type="GO" id="GO:0005524">
    <property type="term" value="F:ATP binding"/>
    <property type="evidence" value="ECO:0007669"/>
    <property type="project" value="UniProtKB-KW"/>
</dbReference>
<dbReference type="GO" id="GO:0000155">
    <property type="term" value="F:phosphorelay sensor kinase activity"/>
    <property type="evidence" value="ECO:0007669"/>
    <property type="project" value="InterPro"/>
</dbReference>
<dbReference type="GO" id="GO:0046983">
    <property type="term" value="F:protein dimerization activity"/>
    <property type="evidence" value="ECO:0007669"/>
    <property type="project" value="InterPro"/>
</dbReference>
<dbReference type="CDD" id="cd16917">
    <property type="entry name" value="HATPase_UhpB-NarQ-NarX-like"/>
    <property type="match status" value="1"/>
</dbReference>
<dbReference type="Gene3D" id="1.20.5.1930">
    <property type="match status" value="1"/>
</dbReference>
<dbReference type="Gene3D" id="3.30.565.10">
    <property type="entry name" value="Histidine kinase-like ATPase, C-terminal domain"/>
    <property type="match status" value="1"/>
</dbReference>
<dbReference type="InterPro" id="IPR036890">
    <property type="entry name" value="HATPase_C_sf"/>
</dbReference>
<dbReference type="InterPro" id="IPR017202">
    <property type="entry name" value="LiaS/VraS"/>
</dbReference>
<dbReference type="InterPro" id="IPR050482">
    <property type="entry name" value="Sensor_HK_TwoCompSys"/>
</dbReference>
<dbReference type="InterPro" id="IPR011712">
    <property type="entry name" value="Sig_transdc_His_kin_sub3_dim/P"/>
</dbReference>
<dbReference type="PANTHER" id="PTHR24421">
    <property type="entry name" value="NITRATE/NITRITE SENSOR PROTEIN NARX-RELATED"/>
    <property type="match status" value="1"/>
</dbReference>
<dbReference type="PANTHER" id="PTHR24421:SF37">
    <property type="entry name" value="SENSOR HISTIDINE KINASE NARS"/>
    <property type="match status" value="1"/>
</dbReference>
<dbReference type="Pfam" id="PF02518">
    <property type="entry name" value="HATPase_c"/>
    <property type="match status" value="1"/>
</dbReference>
<dbReference type="Pfam" id="PF07730">
    <property type="entry name" value="HisKA_3"/>
    <property type="match status" value="1"/>
</dbReference>
<dbReference type="PIRSF" id="PIRSF037431">
    <property type="entry name" value="STHK_LiaS"/>
    <property type="match status" value="1"/>
</dbReference>
<dbReference type="SMART" id="SM00387">
    <property type="entry name" value="HATPase_c"/>
    <property type="match status" value="1"/>
</dbReference>
<dbReference type="SUPFAM" id="SSF55874">
    <property type="entry name" value="ATPase domain of HSP90 chaperone/DNA topoisomerase II/histidine kinase"/>
    <property type="match status" value="1"/>
</dbReference>